<protein>
    <recommendedName>
        <fullName>Mediator of RNA polymerase II transcription subunit 29</fullName>
    </recommendedName>
    <alternativeName>
        <fullName>Mediator complex subunit 29</fullName>
    </alternativeName>
    <alternativeName>
        <fullName>Protein intersex</fullName>
    </alternativeName>
</protein>
<sequence length="205" mass="23200">MNPNMNMMQMSGPPMMQVSPMMQSSPQPMMPTGPPGPVPMQQQHQQQQQQQQQQQQQQQQQAEKLDNISRVKSLLGPLRESMFLTIRSSAFTLQQNNLADNLKRDTGGHGHVPRFDKHLEDFYACCDQMELHLKTAIQCMQQLTSSQHYLPGAVTAMRMENFMQDNPAGPIPYPTYLNTVRVHVQSAKDIHDTLISAAQNISQAD</sequence>
<evidence type="ECO:0000250" key="1"/>
<evidence type="ECO:0000256" key="2">
    <source>
        <dbReference type="SAM" id="MobiDB-lite"/>
    </source>
</evidence>
<evidence type="ECO:0000305" key="3"/>
<gene>
    <name type="primary">ix</name>
    <name type="synonym">MED29</name>
    <name type="ORF">GJ21983</name>
</gene>
<name>MED29_DROVI</name>
<feature type="chain" id="PRO_0000305704" description="Mediator of RNA polymerase II transcription subunit 29">
    <location>
        <begin position="1"/>
        <end position="205"/>
    </location>
</feature>
<feature type="region of interest" description="Disordered" evidence="2">
    <location>
        <begin position="1"/>
        <end position="65"/>
    </location>
</feature>
<feature type="compositionally biased region" description="Low complexity" evidence="2">
    <location>
        <begin position="1"/>
        <end position="27"/>
    </location>
</feature>
<feature type="compositionally biased region" description="Pro residues" evidence="2">
    <location>
        <begin position="28"/>
        <end position="38"/>
    </location>
</feature>
<feature type="compositionally biased region" description="Low complexity" evidence="2">
    <location>
        <begin position="39"/>
        <end position="61"/>
    </location>
</feature>
<feature type="sequence conflict" description="In Ref. 1; AAV65946." evidence="3" ref="1">
    <original>H</original>
    <variation>HQ</variation>
    <location>
        <position position="44"/>
    </location>
</feature>
<keyword id="KW-0010">Activator</keyword>
<keyword id="KW-0539">Nucleus</keyword>
<keyword id="KW-1185">Reference proteome</keyword>
<keyword id="KW-0804">Transcription</keyword>
<keyword id="KW-0805">Transcription regulation</keyword>
<organism>
    <name type="scientific">Drosophila virilis</name>
    <name type="common">Fruit fly</name>
    <dbReference type="NCBI Taxonomy" id="7244"/>
    <lineage>
        <taxon>Eukaryota</taxon>
        <taxon>Metazoa</taxon>
        <taxon>Ecdysozoa</taxon>
        <taxon>Arthropoda</taxon>
        <taxon>Hexapoda</taxon>
        <taxon>Insecta</taxon>
        <taxon>Pterygota</taxon>
        <taxon>Neoptera</taxon>
        <taxon>Endopterygota</taxon>
        <taxon>Diptera</taxon>
        <taxon>Brachycera</taxon>
        <taxon>Muscomorpha</taxon>
        <taxon>Ephydroidea</taxon>
        <taxon>Drosophilidae</taxon>
        <taxon>Drosophila</taxon>
    </lineage>
</organism>
<proteinExistence type="evidence at transcript level"/>
<reference key="1">
    <citation type="journal article" date="2005" name="Dev. Genes Evol.">
        <title>Functional conservation and divergence of intersex, a gene required for female differentiation in Drosophila melanogaster.</title>
        <authorList>
            <person name="Siegal M.L."/>
            <person name="Baker B.S."/>
        </authorList>
    </citation>
    <scope>NUCLEOTIDE SEQUENCE [GENOMIC DNA]</scope>
    <scope>NUCLEOTIDE SEQUENCE [MRNA] OF 9-199</scope>
</reference>
<reference key="2">
    <citation type="journal article" date="2007" name="Nature">
        <title>Evolution of genes and genomes on the Drosophila phylogeny.</title>
        <authorList>
            <consortium name="Drosophila 12 genomes consortium"/>
        </authorList>
    </citation>
    <scope>NUCLEOTIDE SEQUENCE [LARGE SCALE GENOMIC DNA]</scope>
    <source>
        <strain>Tucson 15010-1051.87</strain>
    </source>
</reference>
<comment type="function">
    <text evidence="1">Component of the Mediator complex, a coactivator involved in the regulated transcription of nearly all RNA polymerase II-dependent genes. Mediator functions as a bridge to convey information from gene-specific regulatory proteins to the basal RNA polymerase II transcription machinery. Mediator is recruited to promoters by direct interactions with regulatory proteins and serves as a scaffold for the assembly of a functional preinitiation complex with RNA polymerase II and the general transcription factors (By similarity).</text>
</comment>
<comment type="subunit">
    <text evidence="1">Component of the Mediator complex.</text>
</comment>
<comment type="subcellular location">
    <subcellularLocation>
        <location evidence="3">Nucleus</location>
    </subcellularLocation>
</comment>
<comment type="similarity">
    <text evidence="3">Belongs to the Mediator complex subunit 29 family.</text>
</comment>
<dbReference type="EMBL" id="AY648338">
    <property type="protein sequence ID" value="AAV65894.1"/>
    <property type="molecule type" value="Genomic_DNA"/>
</dbReference>
<dbReference type="EMBL" id="AY649563">
    <property type="protein sequence ID" value="AAV65946.1"/>
    <property type="molecule type" value="mRNA"/>
</dbReference>
<dbReference type="EMBL" id="CH940648">
    <property type="protein sequence ID" value="EDW61344.1"/>
    <property type="molecule type" value="Genomic_DNA"/>
</dbReference>
<dbReference type="RefSeq" id="XP_002050151.1">
    <property type="nucleotide sequence ID" value="XM_002050115.4"/>
</dbReference>
<dbReference type="SMR" id="Q5ISW5"/>
<dbReference type="FunCoup" id="Q5ISW5">
    <property type="interactions" value="1016"/>
</dbReference>
<dbReference type="STRING" id="7244.Q5ISW5"/>
<dbReference type="EnsemblMetazoa" id="FBtr0237908">
    <property type="protein sequence ID" value="FBpp0236400"/>
    <property type="gene ID" value="FBgn0209097"/>
</dbReference>
<dbReference type="EnsemblMetazoa" id="XM_002050115.3">
    <property type="protein sequence ID" value="XP_002050151.1"/>
    <property type="gene ID" value="LOC6625475"/>
</dbReference>
<dbReference type="GeneID" id="6625475"/>
<dbReference type="KEGG" id="dvi:6625475"/>
<dbReference type="CTD" id="45881"/>
<dbReference type="eggNOG" id="ENOG502QRNJ">
    <property type="taxonomic scope" value="Eukaryota"/>
</dbReference>
<dbReference type="HOGENOM" id="CLU_101133_0_0_1"/>
<dbReference type="InParanoid" id="Q5ISW5"/>
<dbReference type="OMA" id="NHYLPGP"/>
<dbReference type="OrthoDB" id="6366949at2759"/>
<dbReference type="PhylomeDB" id="Q5ISW5"/>
<dbReference type="Proteomes" id="UP000008792">
    <property type="component" value="Unassembled WGS sequence"/>
</dbReference>
<dbReference type="GO" id="GO:0016592">
    <property type="term" value="C:mediator complex"/>
    <property type="evidence" value="ECO:0000250"/>
    <property type="project" value="UniProtKB"/>
</dbReference>
<dbReference type="GO" id="GO:0140297">
    <property type="term" value="F:DNA-binding transcription factor binding"/>
    <property type="evidence" value="ECO:0007669"/>
    <property type="project" value="EnsemblMetazoa"/>
</dbReference>
<dbReference type="GO" id="GO:0003712">
    <property type="term" value="F:transcription coregulator activity"/>
    <property type="evidence" value="ECO:0000250"/>
    <property type="project" value="UniProtKB"/>
</dbReference>
<dbReference type="GO" id="GO:0035263">
    <property type="term" value="P:genital disc sexually dimorphic development"/>
    <property type="evidence" value="ECO:0007669"/>
    <property type="project" value="EnsemblMetazoa"/>
</dbReference>
<dbReference type="GO" id="GO:0048804">
    <property type="term" value="P:imaginal disc-derived female genitalia morphogenesis"/>
    <property type="evidence" value="ECO:0007669"/>
    <property type="project" value="EnsemblMetazoa"/>
</dbReference>
<dbReference type="GO" id="GO:0006357">
    <property type="term" value="P:regulation of transcription by RNA polymerase II"/>
    <property type="evidence" value="ECO:0000250"/>
    <property type="project" value="UniProtKB"/>
</dbReference>
<dbReference type="GO" id="GO:0007530">
    <property type="term" value="P:sex determination"/>
    <property type="evidence" value="ECO:0007669"/>
    <property type="project" value="EnsemblMetazoa"/>
</dbReference>
<dbReference type="InterPro" id="IPR021018">
    <property type="entry name" value="Mediator_Med29_met"/>
</dbReference>
<dbReference type="PANTHER" id="PTHR28314">
    <property type="entry name" value="MEDIATOR OF RNA POLYMERASE II TRANSCRIPTION SUBUNIT 29"/>
    <property type="match status" value="1"/>
</dbReference>
<dbReference type="PANTHER" id="PTHR28314:SF1">
    <property type="entry name" value="MEDIATOR OF RNA POLYMERASE II TRANSCRIPTION SUBUNIT 29"/>
    <property type="match status" value="1"/>
</dbReference>
<dbReference type="Pfam" id="PF11568">
    <property type="entry name" value="Med29"/>
    <property type="match status" value="1"/>
</dbReference>
<accession>Q5ISW5</accession>
<accession>B4LQ59</accession>
<accession>Q5ISV2</accession>